<accession>Q83DX5</accession>
<dbReference type="EC" id="3.1.-.-" evidence="1"/>
<dbReference type="EMBL" id="AE016828">
    <property type="protein sequence ID" value="AAO90111.1"/>
    <property type="molecule type" value="Genomic_DNA"/>
</dbReference>
<dbReference type="RefSeq" id="NP_819597.1">
    <property type="nucleotide sequence ID" value="NC_002971.3"/>
</dbReference>
<dbReference type="RefSeq" id="WP_005771102.1">
    <property type="nucleotide sequence ID" value="NZ_CCYB01000049.1"/>
</dbReference>
<dbReference type="SMR" id="Q83DX5"/>
<dbReference type="STRING" id="227377.CBU_0567"/>
<dbReference type="DNASU" id="1208452"/>
<dbReference type="EnsemblBacteria" id="AAO90111">
    <property type="protein sequence ID" value="AAO90111"/>
    <property type="gene ID" value="CBU_0567"/>
</dbReference>
<dbReference type="GeneID" id="1208452"/>
<dbReference type="KEGG" id="cbu:CBU_0567"/>
<dbReference type="PATRIC" id="fig|227377.7.peg.561"/>
<dbReference type="eggNOG" id="COG0319">
    <property type="taxonomic scope" value="Bacteria"/>
</dbReference>
<dbReference type="HOGENOM" id="CLU_106710_0_1_6"/>
<dbReference type="OrthoDB" id="9807740at2"/>
<dbReference type="Proteomes" id="UP000002671">
    <property type="component" value="Chromosome"/>
</dbReference>
<dbReference type="GO" id="GO:0005737">
    <property type="term" value="C:cytoplasm"/>
    <property type="evidence" value="ECO:0007669"/>
    <property type="project" value="UniProtKB-SubCell"/>
</dbReference>
<dbReference type="GO" id="GO:0004222">
    <property type="term" value="F:metalloendopeptidase activity"/>
    <property type="evidence" value="ECO:0007669"/>
    <property type="project" value="InterPro"/>
</dbReference>
<dbReference type="GO" id="GO:0004521">
    <property type="term" value="F:RNA endonuclease activity"/>
    <property type="evidence" value="ECO:0007669"/>
    <property type="project" value="UniProtKB-UniRule"/>
</dbReference>
<dbReference type="GO" id="GO:0008270">
    <property type="term" value="F:zinc ion binding"/>
    <property type="evidence" value="ECO:0007669"/>
    <property type="project" value="UniProtKB-UniRule"/>
</dbReference>
<dbReference type="GO" id="GO:0006364">
    <property type="term" value="P:rRNA processing"/>
    <property type="evidence" value="ECO:0007669"/>
    <property type="project" value="UniProtKB-UniRule"/>
</dbReference>
<dbReference type="Gene3D" id="3.40.390.30">
    <property type="entry name" value="Metalloproteases ('zincins'), catalytic domain"/>
    <property type="match status" value="1"/>
</dbReference>
<dbReference type="HAMAP" id="MF_00009">
    <property type="entry name" value="Endoribonucl_YbeY"/>
    <property type="match status" value="1"/>
</dbReference>
<dbReference type="InterPro" id="IPR023091">
    <property type="entry name" value="MetalPrtase_cat_dom_sf_prd"/>
</dbReference>
<dbReference type="InterPro" id="IPR002036">
    <property type="entry name" value="YbeY"/>
</dbReference>
<dbReference type="InterPro" id="IPR020549">
    <property type="entry name" value="YbeY_CS"/>
</dbReference>
<dbReference type="NCBIfam" id="TIGR00043">
    <property type="entry name" value="rRNA maturation RNase YbeY"/>
    <property type="match status" value="1"/>
</dbReference>
<dbReference type="PANTHER" id="PTHR46986">
    <property type="entry name" value="ENDORIBONUCLEASE YBEY, CHLOROPLASTIC"/>
    <property type="match status" value="1"/>
</dbReference>
<dbReference type="PANTHER" id="PTHR46986:SF1">
    <property type="entry name" value="ENDORIBONUCLEASE YBEY, CHLOROPLASTIC"/>
    <property type="match status" value="1"/>
</dbReference>
<dbReference type="Pfam" id="PF02130">
    <property type="entry name" value="YbeY"/>
    <property type="match status" value="1"/>
</dbReference>
<dbReference type="SUPFAM" id="SSF55486">
    <property type="entry name" value="Metalloproteases ('zincins'), catalytic domain"/>
    <property type="match status" value="1"/>
</dbReference>
<dbReference type="PROSITE" id="PS01306">
    <property type="entry name" value="UPF0054"/>
    <property type="match status" value="1"/>
</dbReference>
<organism>
    <name type="scientific">Coxiella burnetii (strain RSA 493 / Nine Mile phase I)</name>
    <dbReference type="NCBI Taxonomy" id="227377"/>
    <lineage>
        <taxon>Bacteria</taxon>
        <taxon>Pseudomonadati</taxon>
        <taxon>Pseudomonadota</taxon>
        <taxon>Gammaproteobacteria</taxon>
        <taxon>Legionellales</taxon>
        <taxon>Coxiellaceae</taxon>
        <taxon>Coxiella</taxon>
    </lineage>
</organism>
<proteinExistence type="inferred from homology"/>
<reference key="1">
    <citation type="journal article" date="2003" name="Proc. Natl. Acad. Sci. U.S.A.">
        <title>Complete genome sequence of the Q-fever pathogen, Coxiella burnetii.</title>
        <authorList>
            <person name="Seshadri R."/>
            <person name="Paulsen I.T."/>
            <person name="Eisen J.A."/>
            <person name="Read T.D."/>
            <person name="Nelson K.E."/>
            <person name="Nelson W.C."/>
            <person name="Ward N.L."/>
            <person name="Tettelin H."/>
            <person name="Davidsen T.M."/>
            <person name="Beanan M.J."/>
            <person name="DeBoy R.T."/>
            <person name="Daugherty S.C."/>
            <person name="Brinkac L.M."/>
            <person name="Madupu R."/>
            <person name="Dodson R.J."/>
            <person name="Khouri H.M."/>
            <person name="Lee K.H."/>
            <person name="Carty H.A."/>
            <person name="Scanlan D."/>
            <person name="Heinzen R.A."/>
            <person name="Thompson H.A."/>
            <person name="Samuel J.E."/>
            <person name="Fraser C.M."/>
            <person name="Heidelberg J.F."/>
        </authorList>
    </citation>
    <scope>NUCLEOTIDE SEQUENCE [LARGE SCALE GENOMIC DNA]</scope>
    <source>
        <strain>RSA 493 / Nine Mile phase I</strain>
    </source>
</reference>
<feature type="chain" id="PRO_0000102446" description="Endoribonuclease YbeY">
    <location>
        <begin position="1"/>
        <end position="152"/>
    </location>
</feature>
<feature type="binding site" evidence="1">
    <location>
        <position position="114"/>
    </location>
    <ligand>
        <name>Zn(2+)</name>
        <dbReference type="ChEBI" id="CHEBI:29105"/>
        <note>catalytic</note>
    </ligand>
</feature>
<feature type="binding site" evidence="1">
    <location>
        <position position="118"/>
    </location>
    <ligand>
        <name>Zn(2+)</name>
        <dbReference type="ChEBI" id="CHEBI:29105"/>
        <note>catalytic</note>
    </ligand>
</feature>
<feature type="binding site" evidence="1">
    <location>
        <position position="124"/>
    </location>
    <ligand>
        <name>Zn(2+)</name>
        <dbReference type="ChEBI" id="CHEBI:29105"/>
        <note>catalytic</note>
    </ligand>
</feature>
<keyword id="KW-0963">Cytoplasm</keyword>
<keyword id="KW-0255">Endonuclease</keyword>
<keyword id="KW-0378">Hydrolase</keyword>
<keyword id="KW-0479">Metal-binding</keyword>
<keyword id="KW-0540">Nuclease</keyword>
<keyword id="KW-1185">Reference proteome</keyword>
<keyword id="KW-0690">Ribosome biogenesis</keyword>
<keyword id="KW-0698">rRNA processing</keyword>
<keyword id="KW-0862">Zinc</keyword>
<comment type="function">
    <text evidence="1">Single strand-specific metallo-endoribonuclease involved in late-stage 70S ribosome quality control and in maturation of the 3' terminus of the 16S rRNA.</text>
</comment>
<comment type="cofactor">
    <cofactor evidence="1">
        <name>Zn(2+)</name>
        <dbReference type="ChEBI" id="CHEBI:29105"/>
    </cofactor>
    <text evidence="1">Binds 1 zinc ion.</text>
</comment>
<comment type="subcellular location">
    <subcellularLocation>
        <location evidence="1">Cytoplasm</location>
    </subcellularLocation>
</comment>
<comment type="similarity">
    <text evidence="1">Belongs to the endoribonuclease YbeY family.</text>
</comment>
<evidence type="ECO:0000255" key="1">
    <source>
        <dbReference type="HAMAP-Rule" id="MF_00009"/>
    </source>
</evidence>
<gene>
    <name evidence="1" type="primary">ybeY</name>
    <name type="ordered locus">CBU_0567</name>
</gene>
<sequence length="152" mass="17296">MISIDVQHATQFEDLPSLSNIEQWVETALQFIVTDKNKSALTIRFIDKEESTELNEHYRHKKGPTNVLSFPDEPIPGFPSESFGDLAICAPLVAEEAHAQHKTTEAHFAHLITHGFLHLLGYDHVENEDAEEMENLEIKILSQLGFENPYEE</sequence>
<protein>
    <recommendedName>
        <fullName evidence="1">Endoribonuclease YbeY</fullName>
        <ecNumber evidence="1">3.1.-.-</ecNumber>
    </recommendedName>
</protein>
<name>YBEY_COXBU</name>